<protein>
    <recommendedName>
        <fullName evidence="1">NADH-quinone oxidoreductase subunit D 2</fullName>
        <ecNumber evidence="1">7.1.1.-</ecNumber>
    </recommendedName>
    <alternativeName>
        <fullName evidence="1">NADH dehydrogenase I subunit D 2</fullName>
    </alternativeName>
    <alternativeName>
        <fullName evidence="1">NDH-1 subunit D 2</fullName>
    </alternativeName>
</protein>
<evidence type="ECO:0000255" key="1">
    <source>
        <dbReference type="HAMAP-Rule" id="MF_01358"/>
    </source>
</evidence>
<accession>A9B480</accession>
<comment type="function">
    <text evidence="1">NDH-1 shuttles electrons from NADH, via FMN and iron-sulfur (Fe-S) centers, to quinones in the respiratory chain. The immediate electron acceptor for the enzyme in this species is believed to be ubiquinone. Couples the redox reaction to proton translocation (for every two electrons transferred, four hydrogen ions are translocated across the cytoplasmic membrane), and thus conserves the redox energy in a proton gradient.</text>
</comment>
<comment type="catalytic activity">
    <reaction evidence="1">
        <text>a quinone + NADH + 5 H(+)(in) = a quinol + NAD(+) + 4 H(+)(out)</text>
        <dbReference type="Rhea" id="RHEA:57888"/>
        <dbReference type="ChEBI" id="CHEBI:15378"/>
        <dbReference type="ChEBI" id="CHEBI:24646"/>
        <dbReference type="ChEBI" id="CHEBI:57540"/>
        <dbReference type="ChEBI" id="CHEBI:57945"/>
        <dbReference type="ChEBI" id="CHEBI:132124"/>
    </reaction>
</comment>
<comment type="subunit">
    <text evidence="1">NDH-1 is composed of 14 different subunits. Subunits NuoB, C, D, E, F, and G constitute the peripheral sector of the complex.</text>
</comment>
<comment type="subcellular location">
    <subcellularLocation>
        <location evidence="1">Cell membrane</location>
        <topology evidence="1">Peripheral membrane protein</topology>
        <orientation evidence="1">Cytoplasmic side</orientation>
    </subcellularLocation>
</comment>
<comment type="similarity">
    <text evidence="1">Belongs to the complex I 49 kDa subunit family.</text>
</comment>
<name>NUOD2_HERA2</name>
<gene>
    <name evidence="1" type="primary">nuoD2</name>
    <name type="ordered locus">Haur_4983</name>
</gene>
<dbReference type="EC" id="7.1.1.-" evidence="1"/>
<dbReference type="EMBL" id="CP000875">
    <property type="protein sequence ID" value="ABX07613.1"/>
    <property type="molecule type" value="Genomic_DNA"/>
</dbReference>
<dbReference type="SMR" id="A9B480"/>
<dbReference type="STRING" id="316274.Haur_4983"/>
<dbReference type="KEGG" id="hau:Haur_4983"/>
<dbReference type="eggNOG" id="COG0649">
    <property type="taxonomic scope" value="Bacteria"/>
</dbReference>
<dbReference type="HOGENOM" id="CLU_015134_1_2_0"/>
<dbReference type="InParanoid" id="A9B480"/>
<dbReference type="Proteomes" id="UP000000787">
    <property type="component" value="Chromosome"/>
</dbReference>
<dbReference type="GO" id="GO:0005886">
    <property type="term" value="C:plasma membrane"/>
    <property type="evidence" value="ECO:0007669"/>
    <property type="project" value="UniProtKB-SubCell"/>
</dbReference>
<dbReference type="GO" id="GO:0051287">
    <property type="term" value="F:NAD binding"/>
    <property type="evidence" value="ECO:0007669"/>
    <property type="project" value="InterPro"/>
</dbReference>
<dbReference type="GO" id="GO:0050136">
    <property type="term" value="F:NADH:ubiquinone reductase (non-electrogenic) activity"/>
    <property type="evidence" value="ECO:0007669"/>
    <property type="project" value="UniProtKB-UniRule"/>
</dbReference>
<dbReference type="GO" id="GO:0048038">
    <property type="term" value="F:quinone binding"/>
    <property type="evidence" value="ECO:0007669"/>
    <property type="project" value="UniProtKB-KW"/>
</dbReference>
<dbReference type="Gene3D" id="1.10.645.10">
    <property type="entry name" value="Cytochrome-c3 Hydrogenase, chain B"/>
    <property type="match status" value="1"/>
</dbReference>
<dbReference type="HAMAP" id="MF_01358">
    <property type="entry name" value="NDH1_NuoD"/>
    <property type="match status" value="1"/>
</dbReference>
<dbReference type="InterPro" id="IPR001135">
    <property type="entry name" value="NADH_Q_OxRdtase_suD"/>
</dbReference>
<dbReference type="InterPro" id="IPR022885">
    <property type="entry name" value="NDH1_su_D/H"/>
</dbReference>
<dbReference type="InterPro" id="IPR029014">
    <property type="entry name" value="NiFe-Hase_large"/>
</dbReference>
<dbReference type="NCBIfam" id="NF004739">
    <property type="entry name" value="PRK06075.1"/>
    <property type="match status" value="1"/>
</dbReference>
<dbReference type="PANTHER" id="PTHR11993:SF10">
    <property type="entry name" value="NADH DEHYDROGENASE [UBIQUINONE] IRON-SULFUR PROTEIN 2, MITOCHONDRIAL"/>
    <property type="match status" value="1"/>
</dbReference>
<dbReference type="PANTHER" id="PTHR11993">
    <property type="entry name" value="NADH-UBIQUINONE OXIDOREDUCTASE 49 KDA SUBUNIT"/>
    <property type="match status" value="1"/>
</dbReference>
<dbReference type="Pfam" id="PF00346">
    <property type="entry name" value="Complex1_49kDa"/>
    <property type="match status" value="1"/>
</dbReference>
<dbReference type="SUPFAM" id="SSF56762">
    <property type="entry name" value="HydB/Nqo4-like"/>
    <property type="match status" value="1"/>
</dbReference>
<reference key="1">
    <citation type="journal article" date="2011" name="Stand. Genomic Sci.">
        <title>Complete genome sequence of the filamentous gliding predatory bacterium Herpetosiphon aurantiacus type strain (114-95(T)).</title>
        <authorList>
            <person name="Kiss H."/>
            <person name="Nett M."/>
            <person name="Domin N."/>
            <person name="Martin K."/>
            <person name="Maresca J.A."/>
            <person name="Copeland A."/>
            <person name="Lapidus A."/>
            <person name="Lucas S."/>
            <person name="Berry K.W."/>
            <person name="Glavina Del Rio T."/>
            <person name="Dalin E."/>
            <person name="Tice H."/>
            <person name="Pitluck S."/>
            <person name="Richardson P."/>
            <person name="Bruce D."/>
            <person name="Goodwin L."/>
            <person name="Han C."/>
            <person name="Detter J.C."/>
            <person name="Schmutz J."/>
            <person name="Brettin T."/>
            <person name="Land M."/>
            <person name="Hauser L."/>
            <person name="Kyrpides N.C."/>
            <person name="Ivanova N."/>
            <person name="Goeker M."/>
            <person name="Woyke T."/>
            <person name="Klenk H.P."/>
            <person name="Bryant D.A."/>
        </authorList>
    </citation>
    <scope>NUCLEOTIDE SEQUENCE [LARGE SCALE GENOMIC DNA]</scope>
    <source>
        <strain>ATCC 23779 / DSM 785 / 114-95</strain>
    </source>
</reference>
<organism>
    <name type="scientific">Herpetosiphon aurantiacus (strain ATCC 23779 / DSM 785 / 114-95)</name>
    <dbReference type="NCBI Taxonomy" id="316274"/>
    <lineage>
        <taxon>Bacteria</taxon>
        <taxon>Bacillati</taxon>
        <taxon>Chloroflexota</taxon>
        <taxon>Chloroflexia</taxon>
        <taxon>Herpetosiphonales</taxon>
        <taxon>Herpetosiphonaceae</taxon>
        <taxon>Herpetosiphon</taxon>
    </lineage>
</organism>
<proteinExistence type="inferred from homology"/>
<keyword id="KW-1003">Cell membrane</keyword>
<keyword id="KW-0472">Membrane</keyword>
<keyword id="KW-0520">NAD</keyword>
<keyword id="KW-0874">Quinone</keyword>
<keyword id="KW-1278">Translocase</keyword>
<keyword id="KW-0813">Transport</keyword>
<keyword id="KW-0830">Ubiquinone</keyword>
<sequence>MLKTEELQINIGPQHPSTHGVFRMLVTVDGETLVDLKPVFGYLHRNHEQLGEVNTYLQNMPFTDRLDYFNSMVNNHAYARAVETLAGVEVPERAQYIRVIMDELSRILNHATAMGFMLGDMGAWQTALLWGMREREKILDMFEYVSGARMMCNYCRFGGVVRDIDDWFITELKKLMQGLPHYFDDFEGLLLNSEILLARARNIGVLPKELALAYSVTGPVLRGSGVAYDIRKAEPYAVYDRFKFKVPVGTVGDVYDRFLVRIAEMRESYKILEQAIEQLPDATGGFINPKVKQQSLKAPAGEAYARVESPKGELGFYLVSDGSGSAYRYKVRAPSFINLSSLADMCKGYSIADVVVILGSIDIVMGEVDR</sequence>
<feature type="chain" id="PRO_0000357831" description="NADH-quinone oxidoreductase subunit D 2">
    <location>
        <begin position="1"/>
        <end position="370"/>
    </location>
</feature>